<accession>Q5UPK6</accession>
<name>YR129_MIMIV</name>
<comment type="similarity">
    <text evidence="1">Belongs to the mimivirus R160 family.</text>
</comment>
<sequence length="176" mass="20470">MQSSKNKINGPINLVRIEGVIDGINKVVYLFMDYHADINEQTNCEDQNNSINISKYLLDNLTTSNDNNVVYDFFLEILPSDIFTNFNTTIFSILKDNELEYLASVKKLFLQNVDNSNNKITSKLKNVRLHYIDIRDKMYLLMYDPIRFAISSINQLQKNPDDKLLDIMHIKLLVDV</sequence>
<organism>
    <name type="scientific">Acanthamoeba polyphaga mimivirus</name>
    <name type="common">APMV</name>
    <dbReference type="NCBI Taxonomy" id="212035"/>
    <lineage>
        <taxon>Viruses</taxon>
        <taxon>Varidnaviria</taxon>
        <taxon>Bamfordvirae</taxon>
        <taxon>Nucleocytoviricota</taxon>
        <taxon>Megaviricetes</taxon>
        <taxon>Imitervirales</taxon>
        <taxon>Mimiviridae</taxon>
        <taxon>Megamimivirinae</taxon>
        <taxon>Mimivirus</taxon>
        <taxon>Mimivirus bradfordmassiliense</taxon>
    </lineage>
</organism>
<keyword id="KW-1185">Reference proteome</keyword>
<protein>
    <recommendedName>
        <fullName>Uncharacterized protein R129</fullName>
    </recommendedName>
</protein>
<feature type="chain" id="PRO_0000071215" description="Uncharacterized protein R129">
    <location>
        <begin position="1"/>
        <end position="176"/>
    </location>
</feature>
<evidence type="ECO:0000305" key="1"/>
<proteinExistence type="inferred from homology"/>
<gene>
    <name type="ordered locus">MIMI_R129</name>
</gene>
<dbReference type="EMBL" id="AY653733">
    <property type="protein sequence ID" value="AAV50404.1"/>
    <property type="molecule type" value="Genomic_DNA"/>
</dbReference>
<dbReference type="KEGG" id="vg:9924729"/>
<dbReference type="Proteomes" id="UP000001134">
    <property type="component" value="Genome"/>
</dbReference>
<dbReference type="InterPro" id="IPR043885">
    <property type="entry name" value="DUF5847"/>
</dbReference>
<dbReference type="Pfam" id="PF19165">
    <property type="entry name" value="DUF5847"/>
    <property type="match status" value="1"/>
</dbReference>
<reference key="1">
    <citation type="journal article" date="2004" name="Science">
        <title>The 1.2-megabase genome sequence of Mimivirus.</title>
        <authorList>
            <person name="Raoult D."/>
            <person name="Audic S."/>
            <person name="Robert C."/>
            <person name="Abergel C."/>
            <person name="Renesto P."/>
            <person name="Ogata H."/>
            <person name="La Scola B."/>
            <person name="Susan M."/>
            <person name="Claverie J.-M."/>
        </authorList>
    </citation>
    <scope>NUCLEOTIDE SEQUENCE [LARGE SCALE GENOMIC DNA]</scope>
    <source>
        <strain>Rowbotham-Bradford</strain>
    </source>
</reference>
<organismHost>
    <name type="scientific">Acanthamoeba polyphaga</name>
    <name type="common">Amoeba</name>
    <dbReference type="NCBI Taxonomy" id="5757"/>
</organismHost>